<proteinExistence type="inferred from homology"/>
<sequence>MIFVDTNVFMYAVGRDHPLRMPAREFLEHSLEHQDRLVTSAEAMQELLNAYVPVGRNSTLDSALTLVRALTEIWPVEAADVAHARTLHHRHPGLGARDLLHLACCQRRGVTRIKTFDHTLASAFRS</sequence>
<feature type="chain" id="PRO_0000428581" description="Ribonuclease VapC23">
    <location>
        <begin position="1"/>
        <end position="126"/>
    </location>
</feature>
<feature type="domain" description="PINc" evidence="1">
    <location>
        <begin position="2"/>
        <end position="118"/>
    </location>
</feature>
<feature type="binding site" evidence="1">
    <location>
        <position position="5"/>
    </location>
    <ligand>
        <name>Mg(2+)</name>
        <dbReference type="ChEBI" id="CHEBI:18420"/>
    </ligand>
</feature>
<feature type="binding site" evidence="1">
    <location>
        <position position="98"/>
    </location>
    <ligand>
        <name>Mg(2+)</name>
        <dbReference type="ChEBI" id="CHEBI:18420"/>
    </ligand>
</feature>
<comment type="function">
    <text evidence="1">Toxic component of a type II toxin-antitoxin (TA) system. An RNase. The cognate antitoxin is VapB23 (By similarity).</text>
</comment>
<comment type="cofactor">
    <cofactor evidence="1">
        <name>Mg(2+)</name>
        <dbReference type="ChEBI" id="CHEBI:18420"/>
    </cofactor>
</comment>
<comment type="similarity">
    <text evidence="1">Belongs to the PINc/VapC protein family.</text>
</comment>
<gene>
    <name evidence="1" type="primary">vapC23</name>
    <name type="ordered locus">MT2932</name>
</gene>
<evidence type="ECO:0000255" key="1">
    <source>
        <dbReference type="HAMAP-Rule" id="MF_00265"/>
    </source>
</evidence>
<name>VPC23_MYCTO</name>
<reference key="1">
    <citation type="journal article" date="2002" name="J. Bacteriol.">
        <title>Whole-genome comparison of Mycobacterium tuberculosis clinical and laboratory strains.</title>
        <authorList>
            <person name="Fleischmann R.D."/>
            <person name="Alland D."/>
            <person name="Eisen J.A."/>
            <person name="Carpenter L."/>
            <person name="White O."/>
            <person name="Peterson J.D."/>
            <person name="DeBoy R.T."/>
            <person name="Dodson R.J."/>
            <person name="Gwinn M.L."/>
            <person name="Haft D.H."/>
            <person name="Hickey E.K."/>
            <person name="Kolonay J.F."/>
            <person name="Nelson W.C."/>
            <person name="Umayam L.A."/>
            <person name="Ermolaeva M.D."/>
            <person name="Salzberg S.L."/>
            <person name="Delcher A."/>
            <person name="Utterback T.R."/>
            <person name="Weidman J.F."/>
            <person name="Khouri H.M."/>
            <person name="Gill J."/>
            <person name="Mikula A."/>
            <person name="Bishai W."/>
            <person name="Jacobs W.R. Jr."/>
            <person name="Venter J.C."/>
            <person name="Fraser C.M."/>
        </authorList>
    </citation>
    <scope>NUCLEOTIDE SEQUENCE [LARGE SCALE GENOMIC DNA]</scope>
    <source>
        <strain>CDC 1551 / Oshkosh</strain>
    </source>
</reference>
<protein>
    <recommendedName>
        <fullName evidence="1">Ribonuclease VapC23</fullName>
        <shortName evidence="1">RNase VapC23</shortName>
        <ecNumber evidence="1">3.1.-.-</ecNumber>
    </recommendedName>
    <alternativeName>
        <fullName evidence="1">Toxin VapC23</fullName>
    </alternativeName>
</protein>
<organism>
    <name type="scientific">Mycobacterium tuberculosis (strain CDC 1551 / Oshkosh)</name>
    <dbReference type="NCBI Taxonomy" id="83331"/>
    <lineage>
        <taxon>Bacteria</taxon>
        <taxon>Bacillati</taxon>
        <taxon>Actinomycetota</taxon>
        <taxon>Actinomycetes</taxon>
        <taxon>Mycobacteriales</taxon>
        <taxon>Mycobacteriaceae</taxon>
        <taxon>Mycobacterium</taxon>
        <taxon>Mycobacterium tuberculosis complex</taxon>
    </lineage>
</organism>
<dbReference type="EC" id="3.1.-.-" evidence="1"/>
<dbReference type="EMBL" id="AE000516">
    <property type="protein sequence ID" value="AAK47257.1"/>
    <property type="molecule type" value="Genomic_DNA"/>
</dbReference>
<dbReference type="PIR" id="A70886">
    <property type="entry name" value="A70886"/>
</dbReference>
<dbReference type="RefSeq" id="WP_003414592.1">
    <property type="nucleotide sequence ID" value="NZ_KK341227.1"/>
</dbReference>
<dbReference type="SMR" id="P9WF88"/>
<dbReference type="KEGG" id="mtc:MT2932"/>
<dbReference type="PATRIC" id="fig|83331.31.peg.3166"/>
<dbReference type="HOGENOM" id="CLU_161973_0_0_11"/>
<dbReference type="Proteomes" id="UP000001020">
    <property type="component" value="Chromosome"/>
</dbReference>
<dbReference type="GO" id="GO:0000287">
    <property type="term" value="F:magnesium ion binding"/>
    <property type="evidence" value="ECO:0007669"/>
    <property type="project" value="UniProtKB-UniRule"/>
</dbReference>
<dbReference type="GO" id="GO:0004540">
    <property type="term" value="F:RNA nuclease activity"/>
    <property type="evidence" value="ECO:0007669"/>
    <property type="project" value="InterPro"/>
</dbReference>
<dbReference type="CDD" id="cd09854">
    <property type="entry name" value="PIN_VapC-like"/>
    <property type="match status" value="1"/>
</dbReference>
<dbReference type="Gene3D" id="3.40.50.1010">
    <property type="entry name" value="5'-nuclease"/>
    <property type="match status" value="1"/>
</dbReference>
<dbReference type="HAMAP" id="MF_00265">
    <property type="entry name" value="VapC_Nob1"/>
    <property type="match status" value="1"/>
</dbReference>
<dbReference type="InterPro" id="IPR029060">
    <property type="entry name" value="PIN-like_dom_sf"/>
</dbReference>
<dbReference type="InterPro" id="IPR002716">
    <property type="entry name" value="PIN_dom"/>
</dbReference>
<dbReference type="InterPro" id="IPR052106">
    <property type="entry name" value="PINc/VapC_TA"/>
</dbReference>
<dbReference type="InterPro" id="IPR022907">
    <property type="entry name" value="VapC_family"/>
</dbReference>
<dbReference type="PANTHER" id="PTHR38826">
    <property type="entry name" value="RIBONUCLEASE VAPC13"/>
    <property type="match status" value="1"/>
</dbReference>
<dbReference type="PANTHER" id="PTHR38826:SF5">
    <property type="entry name" value="RIBONUCLEASE VAPC13"/>
    <property type="match status" value="1"/>
</dbReference>
<dbReference type="Pfam" id="PF01850">
    <property type="entry name" value="PIN"/>
    <property type="match status" value="1"/>
</dbReference>
<dbReference type="SUPFAM" id="SSF88723">
    <property type="entry name" value="PIN domain-like"/>
    <property type="match status" value="1"/>
</dbReference>
<keyword id="KW-0378">Hydrolase</keyword>
<keyword id="KW-0460">Magnesium</keyword>
<keyword id="KW-0479">Metal-binding</keyword>
<keyword id="KW-0540">Nuclease</keyword>
<keyword id="KW-1185">Reference proteome</keyword>
<keyword id="KW-1277">Toxin-antitoxin system</keyword>
<accession>P9WF88</accession>
<accession>L0TAV5</accession>
<accession>O33345</accession>
<accession>Q7D6F8</accession>